<name>NADA_HALS3</name>
<evidence type="ECO:0000255" key="1">
    <source>
        <dbReference type="HAMAP-Rule" id="MF_00569"/>
    </source>
</evidence>
<keyword id="KW-0004">4Fe-4S</keyword>
<keyword id="KW-0963">Cytoplasm</keyword>
<keyword id="KW-0408">Iron</keyword>
<keyword id="KW-0411">Iron-sulfur</keyword>
<keyword id="KW-0479">Metal-binding</keyword>
<keyword id="KW-0662">Pyridine nucleotide biosynthesis</keyword>
<keyword id="KW-0808">Transferase</keyword>
<proteinExistence type="inferred from homology"/>
<dbReference type="EC" id="2.5.1.72" evidence="1"/>
<dbReference type="EMBL" id="AM774415">
    <property type="protein sequence ID" value="CAP14372.1"/>
    <property type="molecule type" value="Genomic_DNA"/>
</dbReference>
<dbReference type="SMR" id="B0R6K3"/>
<dbReference type="EnsemblBacteria" id="CAP14372">
    <property type="protein sequence ID" value="CAP14372"/>
    <property type="gene ID" value="OE_3644F"/>
</dbReference>
<dbReference type="KEGG" id="hsl:OE_3644F"/>
<dbReference type="HOGENOM" id="CLU_047382_2_0_2"/>
<dbReference type="PhylomeDB" id="B0R6K3"/>
<dbReference type="UniPathway" id="UPA00253">
    <property type="reaction ID" value="UER00327"/>
</dbReference>
<dbReference type="Proteomes" id="UP000001321">
    <property type="component" value="Chromosome"/>
</dbReference>
<dbReference type="GO" id="GO:0005737">
    <property type="term" value="C:cytoplasm"/>
    <property type="evidence" value="ECO:0007669"/>
    <property type="project" value="UniProtKB-SubCell"/>
</dbReference>
<dbReference type="GO" id="GO:0051539">
    <property type="term" value="F:4 iron, 4 sulfur cluster binding"/>
    <property type="evidence" value="ECO:0007669"/>
    <property type="project" value="UniProtKB-KW"/>
</dbReference>
<dbReference type="GO" id="GO:0046872">
    <property type="term" value="F:metal ion binding"/>
    <property type="evidence" value="ECO:0007669"/>
    <property type="project" value="UniProtKB-KW"/>
</dbReference>
<dbReference type="GO" id="GO:0008987">
    <property type="term" value="F:quinolinate synthetase A activity"/>
    <property type="evidence" value="ECO:0007669"/>
    <property type="project" value="UniProtKB-UniRule"/>
</dbReference>
<dbReference type="GO" id="GO:0034628">
    <property type="term" value="P:'de novo' NAD biosynthetic process from L-aspartate"/>
    <property type="evidence" value="ECO:0007669"/>
    <property type="project" value="TreeGrafter"/>
</dbReference>
<dbReference type="Gene3D" id="3.40.50.10800">
    <property type="entry name" value="NadA-like"/>
    <property type="match status" value="3"/>
</dbReference>
<dbReference type="HAMAP" id="MF_00569">
    <property type="entry name" value="NadA_type3"/>
    <property type="match status" value="1"/>
</dbReference>
<dbReference type="InterPro" id="IPR003473">
    <property type="entry name" value="NadA"/>
</dbReference>
<dbReference type="InterPro" id="IPR036094">
    <property type="entry name" value="NadA_sf"/>
</dbReference>
<dbReference type="InterPro" id="IPR023515">
    <property type="entry name" value="Quinolinate_synth_A_type3"/>
</dbReference>
<dbReference type="NCBIfam" id="TIGR00550">
    <property type="entry name" value="nadA"/>
    <property type="match status" value="1"/>
</dbReference>
<dbReference type="NCBIfam" id="NF006883">
    <property type="entry name" value="PRK09375.2-4"/>
    <property type="match status" value="1"/>
</dbReference>
<dbReference type="PANTHER" id="PTHR30573:SF0">
    <property type="entry name" value="QUINOLINATE SYNTHASE, CHLOROPLASTIC"/>
    <property type="match status" value="1"/>
</dbReference>
<dbReference type="PANTHER" id="PTHR30573">
    <property type="entry name" value="QUINOLINATE SYNTHETASE A"/>
    <property type="match status" value="1"/>
</dbReference>
<dbReference type="Pfam" id="PF02445">
    <property type="entry name" value="NadA"/>
    <property type="match status" value="1"/>
</dbReference>
<dbReference type="SUPFAM" id="SSF142754">
    <property type="entry name" value="NadA-like"/>
    <property type="match status" value="1"/>
</dbReference>
<feature type="chain" id="PRO_1000129456" description="Quinolinate synthase">
    <location>
        <begin position="1"/>
        <end position="374"/>
    </location>
</feature>
<feature type="binding site" evidence="1">
    <location>
        <position position="53"/>
    </location>
    <ligand>
        <name>iminosuccinate</name>
        <dbReference type="ChEBI" id="CHEBI:77875"/>
    </ligand>
</feature>
<feature type="binding site" evidence="1">
    <location>
        <position position="70"/>
    </location>
    <ligand>
        <name>iminosuccinate</name>
        <dbReference type="ChEBI" id="CHEBI:77875"/>
    </ligand>
</feature>
<feature type="binding site" evidence="1">
    <location>
        <position position="116"/>
    </location>
    <ligand>
        <name>[4Fe-4S] cluster</name>
        <dbReference type="ChEBI" id="CHEBI:49883"/>
    </ligand>
</feature>
<feature type="binding site" evidence="1">
    <location>
        <begin position="148"/>
        <end position="150"/>
    </location>
    <ligand>
        <name>iminosuccinate</name>
        <dbReference type="ChEBI" id="CHEBI:77875"/>
    </ligand>
</feature>
<feature type="binding site" evidence="1">
    <location>
        <position position="169"/>
    </location>
    <ligand>
        <name>iminosuccinate</name>
        <dbReference type="ChEBI" id="CHEBI:77875"/>
    </ligand>
</feature>
<feature type="binding site" evidence="1">
    <location>
        <position position="236"/>
    </location>
    <ligand>
        <name>[4Fe-4S] cluster</name>
        <dbReference type="ChEBI" id="CHEBI:49883"/>
    </ligand>
</feature>
<feature type="binding site" evidence="1">
    <location>
        <begin position="262"/>
        <end position="264"/>
    </location>
    <ligand>
        <name>iminosuccinate</name>
        <dbReference type="ChEBI" id="CHEBI:77875"/>
    </ligand>
</feature>
<feature type="binding site" evidence="1">
    <location>
        <position position="279"/>
    </location>
    <ligand>
        <name>iminosuccinate</name>
        <dbReference type="ChEBI" id="CHEBI:77875"/>
    </ligand>
</feature>
<feature type="binding site" evidence="1">
    <location>
        <position position="327"/>
    </location>
    <ligand>
        <name>[4Fe-4S] cluster</name>
        <dbReference type="ChEBI" id="CHEBI:49883"/>
    </ligand>
</feature>
<sequence length="374" mass="41306">MDTSSFETDLSLFKYDDLEALPDEYRELTPTARTERIEAARAELGDDVVVLGHNYQRREIVEHADFVGDSYQLSKEAANADADYVIFGGVTFMAESADIITDDSQSVILPSMEASCPMAGMAEALQVDAAWADITAAAPDETIIPITYMNSYADLKAFCAEQGGLVCTSSNAHRAFEWAFERGDKVLFLPDKHLGENTAHRLGMADATVEWDPWAAEGKTAEEVADADIVLWDGYCQVHERFTPEHVAEVRADHEDANVVVHPECRREVVEAADVVGSTATITETVADADPGETWAIGTEIHLANHLQRWHPEVNVVPLCGDACMDCNAMRQIDPNYLAWVLEELVEGRERNVIEVDSEEAELAQVGLDRMLEL</sequence>
<comment type="function">
    <text evidence="1">Catalyzes the condensation of iminoaspartate with dihydroxyacetone phosphate to form quinolinate.</text>
</comment>
<comment type="catalytic activity">
    <reaction evidence="1">
        <text>iminosuccinate + dihydroxyacetone phosphate = quinolinate + phosphate + 2 H2O + H(+)</text>
        <dbReference type="Rhea" id="RHEA:25888"/>
        <dbReference type="ChEBI" id="CHEBI:15377"/>
        <dbReference type="ChEBI" id="CHEBI:15378"/>
        <dbReference type="ChEBI" id="CHEBI:29959"/>
        <dbReference type="ChEBI" id="CHEBI:43474"/>
        <dbReference type="ChEBI" id="CHEBI:57642"/>
        <dbReference type="ChEBI" id="CHEBI:77875"/>
        <dbReference type="EC" id="2.5.1.72"/>
    </reaction>
    <physiologicalReaction direction="left-to-right" evidence="1">
        <dbReference type="Rhea" id="RHEA:25889"/>
    </physiologicalReaction>
</comment>
<comment type="cofactor">
    <cofactor evidence="1">
        <name>[4Fe-4S] cluster</name>
        <dbReference type="ChEBI" id="CHEBI:49883"/>
    </cofactor>
    <text evidence="1">Binds 1 [4Fe-4S] cluster per subunit.</text>
</comment>
<comment type="pathway">
    <text evidence="1">Cofactor biosynthesis; NAD(+) biosynthesis; quinolinate from iminoaspartate: step 1/1.</text>
</comment>
<comment type="subcellular location">
    <subcellularLocation>
        <location evidence="1">Cytoplasm</location>
    </subcellularLocation>
</comment>
<comment type="similarity">
    <text evidence="1">Belongs to the quinolinate synthase family. Type 3 subfamily.</text>
</comment>
<protein>
    <recommendedName>
        <fullName evidence="1">Quinolinate synthase</fullName>
        <ecNumber evidence="1">2.5.1.72</ecNumber>
    </recommendedName>
</protein>
<accession>B0R6K3</accession>
<reference key="1">
    <citation type="journal article" date="2008" name="Genomics">
        <title>Evolution in the laboratory: the genome of Halobacterium salinarum strain R1 compared to that of strain NRC-1.</title>
        <authorList>
            <person name="Pfeiffer F."/>
            <person name="Schuster S.C."/>
            <person name="Broicher A."/>
            <person name="Falb M."/>
            <person name="Palm P."/>
            <person name="Rodewald K."/>
            <person name="Ruepp A."/>
            <person name="Soppa J."/>
            <person name="Tittor J."/>
            <person name="Oesterhelt D."/>
        </authorList>
    </citation>
    <scope>NUCLEOTIDE SEQUENCE [LARGE SCALE GENOMIC DNA]</scope>
    <source>
        <strain>ATCC 29341 / DSM 671 / R1</strain>
    </source>
</reference>
<gene>
    <name evidence="1" type="primary">nadA</name>
    <name type="ordered locus">OE_3644F</name>
</gene>
<organism>
    <name type="scientific">Halobacterium salinarum (strain ATCC 29341 / DSM 671 / R1)</name>
    <dbReference type="NCBI Taxonomy" id="478009"/>
    <lineage>
        <taxon>Archaea</taxon>
        <taxon>Methanobacteriati</taxon>
        <taxon>Methanobacteriota</taxon>
        <taxon>Stenosarchaea group</taxon>
        <taxon>Halobacteria</taxon>
        <taxon>Halobacteriales</taxon>
        <taxon>Halobacteriaceae</taxon>
        <taxon>Halobacterium</taxon>
        <taxon>Halobacterium salinarum NRC-34001</taxon>
    </lineage>
</organism>